<keyword id="KW-0963">Cytoplasm</keyword>
<keyword id="KW-0238">DNA-binding</keyword>
<keyword id="KW-0677">Repeat</keyword>
<keyword id="KW-0804">Transcription</keyword>
<keyword id="KW-0805">Transcription regulation</keyword>
<reference key="1">
    <citation type="journal article" date="2006" name="Proc. Natl. Acad. Sci. U.S.A.">
        <title>The complete genome of Rhodococcus sp. RHA1 provides insights into a catabolic powerhouse.</title>
        <authorList>
            <person name="McLeod M.P."/>
            <person name="Warren R.L."/>
            <person name="Hsiao W.W.L."/>
            <person name="Araki N."/>
            <person name="Myhre M."/>
            <person name="Fernandes C."/>
            <person name="Miyazawa D."/>
            <person name="Wong W."/>
            <person name="Lillquist A.L."/>
            <person name="Wang D."/>
            <person name="Dosanjh M."/>
            <person name="Hara H."/>
            <person name="Petrescu A."/>
            <person name="Morin R.D."/>
            <person name="Yang G."/>
            <person name="Stott J.M."/>
            <person name="Schein J.E."/>
            <person name="Shin H."/>
            <person name="Smailus D."/>
            <person name="Siddiqui A.S."/>
            <person name="Marra M.A."/>
            <person name="Jones S.J.M."/>
            <person name="Holt R."/>
            <person name="Brinkman F.S.L."/>
            <person name="Miyauchi K."/>
            <person name="Fukuda M."/>
            <person name="Davies J.E."/>
            <person name="Mohn W.W."/>
            <person name="Eltis L.D."/>
        </authorList>
    </citation>
    <scope>NUCLEOTIDE SEQUENCE [LARGE SCALE GENOMIC DNA]</scope>
    <source>
        <strain>RHA1</strain>
    </source>
</reference>
<comment type="subunit">
    <text evidence="1">Forms oligomers.</text>
</comment>
<comment type="subcellular location">
    <subcellularLocation>
        <location evidence="1">Cytoplasm</location>
        <location evidence="1">Nucleoid</location>
    </subcellularLocation>
</comment>
<comment type="similarity">
    <text evidence="1">Belongs to the MraZ family.</text>
</comment>
<protein>
    <recommendedName>
        <fullName>Transcriptional regulator MraZ</fullName>
    </recommendedName>
</protein>
<dbReference type="EMBL" id="CP000431">
    <property type="protein sequence ID" value="ABG92924.1"/>
    <property type="molecule type" value="Genomic_DNA"/>
</dbReference>
<dbReference type="RefSeq" id="WP_011594229.1">
    <property type="nucleotide sequence ID" value="NC_008268.1"/>
</dbReference>
<dbReference type="SMR" id="Q0SHR2"/>
<dbReference type="KEGG" id="rha:RHA1_ro01097"/>
<dbReference type="PATRIC" id="fig|101510.16.peg.1121"/>
<dbReference type="eggNOG" id="COG2001">
    <property type="taxonomic scope" value="Bacteria"/>
</dbReference>
<dbReference type="HOGENOM" id="CLU_107907_0_5_11"/>
<dbReference type="OrthoDB" id="9807753at2"/>
<dbReference type="Proteomes" id="UP000008710">
    <property type="component" value="Chromosome"/>
</dbReference>
<dbReference type="GO" id="GO:0005737">
    <property type="term" value="C:cytoplasm"/>
    <property type="evidence" value="ECO:0007669"/>
    <property type="project" value="UniProtKB-UniRule"/>
</dbReference>
<dbReference type="GO" id="GO:0009295">
    <property type="term" value="C:nucleoid"/>
    <property type="evidence" value="ECO:0007669"/>
    <property type="project" value="UniProtKB-SubCell"/>
</dbReference>
<dbReference type="GO" id="GO:0003700">
    <property type="term" value="F:DNA-binding transcription factor activity"/>
    <property type="evidence" value="ECO:0007669"/>
    <property type="project" value="UniProtKB-UniRule"/>
</dbReference>
<dbReference type="GO" id="GO:0000976">
    <property type="term" value="F:transcription cis-regulatory region binding"/>
    <property type="evidence" value="ECO:0007669"/>
    <property type="project" value="TreeGrafter"/>
</dbReference>
<dbReference type="GO" id="GO:2000143">
    <property type="term" value="P:negative regulation of DNA-templated transcription initiation"/>
    <property type="evidence" value="ECO:0007669"/>
    <property type="project" value="TreeGrafter"/>
</dbReference>
<dbReference type="CDD" id="cd16321">
    <property type="entry name" value="MraZ_C"/>
    <property type="match status" value="1"/>
</dbReference>
<dbReference type="CDD" id="cd16320">
    <property type="entry name" value="MraZ_N"/>
    <property type="match status" value="1"/>
</dbReference>
<dbReference type="Gene3D" id="3.40.1550.20">
    <property type="entry name" value="Transcriptional regulator MraZ domain"/>
    <property type="match status" value="1"/>
</dbReference>
<dbReference type="HAMAP" id="MF_01008">
    <property type="entry name" value="MraZ"/>
    <property type="match status" value="1"/>
</dbReference>
<dbReference type="InterPro" id="IPR003444">
    <property type="entry name" value="MraZ"/>
</dbReference>
<dbReference type="InterPro" id="IPR035644">
    <property type="entry name" value="MraZ_C"/>
</dbReference>
<dbReference type="InterPro" id="IPR020603">
    <property type="entry name" value="MraZ_dom"/>
</dbReference>
<dbReference type="InterPro" id="IPR035642">
    <property type="entry name" value="MraZ_N"/>
</dbReference>
<dbReference type="InterPro" id="IPR038619">
    <property type="entry name" value="MraZ_sf"/>
</dbReference>
<dbReference type="InterPro" id="IPR007159">
    <property type="entry name" value="SpoVT-AbrB_dom"/>
</dbReference>
<dbReference type="InterPro" id="IPR037914">
    <property type="entry name" value="SpoVT-AbrB_sf"/>
</dbReference>
<dbReference type="NCBIfam" id="TIGR00242">
    <property type="entry name" value="division/cell wall cluster transcriptional repressor MraZ"/>
    <property type="match status" value="1"/>
</dbReference>
<dbReference type="PANTHER" id="PTHR34701">
    <property type="entry name" value="TRANSCRIPTIONAL REGULATOR MRAZ"/>
    <property type="match status" value="1"/>
</dbReference>
<dbReference type="PANTHER" id="PTHR34701:SF1">
    <property type="entry name" value="TRANSCRIPTIONAL REGULATOR MRAZ"/>
    <property type="match status" value="1"/>
</dbReference>
<dbReference type="Pfam" id="PF02381">
    <property type="entry name" value="MraZ"/>
    <property type="match status" value="2"/>
</dbReference>
<dbReference type="SUPFAM" id="SSF89447">
    <property type="entry name" value="AbrB/MazE/MraZ-like"/>
    <property type="match status" value="1"/>
</dbReference>
<dbReference type="PROSITE" id="PS51740">
    <property type="entry name" value="SPOVT_ABRB"/>
    <property type="match status" value="2"/>
</dbReference>
<sequence length="143" mass="15532">MFLGTYTPKLDEKGRLTLPAKFRDALAGGLMVTKGQDHSLAVYPREEFTALARKAAAASRSDPEARAFVRGLAAGTDEQHADAQGRITLSADHRRYAGLSKDCVVIGSVDFLEIWDAQAWQTYVEANEENYSQATGVALGEIV</sequence>
<feature type="chain" id="PRO_1000062919" description="Transcriptional regulator MraZ">
    <location>
        <begin position="1"/>
        <end position="143"/>
    </location>
</feature>
<feature type="domain" description="SpoVT-AbrB 1" evidence="2">
    <location>
        <begin position="5"/>
        <end position="47"/>
    </location>
</feature>
<feature type="domain" description="SpoVT-AbrB 2" evidence="2">
    <location>
        <begin position="76"/>
        <end position="119"/>
    </location>
</feature>
<evidence type="ECO:0000255" key="1">
    <source>
        <dbReference type="HAMAP-Rule" id="MF_01008"/>
    </source>
</evidence>
<evidence type="ECO:0000255" key="2">
    <source>
        <dbReference type="PROSITE-ProRule" id="PRU01076"/>
    </source>
</evidence>
<name>MRAZ_RHOJR</name>
<organism>
    <name type="scientific">Rhodococcus jostii (strain RHA1)</name>
    <dbReference type="NCBI Taxonomy" id="101510"/>
    <lineage>
        <taxon>Bacteria</taxon>
        <taxon>Bacillati</taxon>
        <taxon>Actinomycetota</taxon>
        <taxon>Actinomycetes</taxon>
        <taxon>Mycobacteriales</taxon>
        <taxon>Nocardiaceae</taxon>
        <taxon>Rhodococcus</taxon>
    </lineage>
</organism>
<accession>Q0SHR2</accession>
<proteinExistence type="inferred from homology"/>
<gene>
    <name evidence="1" type="primary">mraZ</name>
    <name type="ordered locus">RHA1_ro01097</name>
</gene>